<dbReference type="EMBL" id="AM920689">
    <property type="protein sequence ID" value="CAP51896.1"/>
    <property type="molecule type" value="Genomic_DNA"/>
</dbReference>
<dbReference type="SMR" id="B0RTY2"/>
<dbReference type="KEGG" id="xca:xcc-b100_2536"/>
<dbReference type="HOGENOM" id="CLU_066607_3_2_6"/>
<dbReference type="Proteomes" id="UP000001188">
    <property type="component" value="Chromosome"/>
</dbReference>
<dbReference type="GO" id="GO:0005737">
    <property type="term" value="C:cytoplasm"/>
    <property type="evidence" value="ECO:0007669"/>
    <property type="project" value="UniProtKB-SubCell"/>
</dbReference>
<dbReference type="GO" id="GO:0006282">
    <property type="term" value="P:regulation of DNA repair"/>
    <property type="evidence" value="ECO:0007669"/>
    <property type="project" value="UniProtKB-UniRule"/>
</dbReference>
<dbReference type="Gene3D" id="1.10.10.10">
    <property type="entry name" value="Winged helix-like DNA-binding domain superfamily/Winged helix DNA-binding domain"/>
    <property type="match status" value="3"/>
</dbReference>
<dbReference type="HAMAP" id="MF_01114">
    <property type="entry name" value="RecX"/>
    <property type="match status" value="1"/>
</dbReference>
<dbReference type="InterPro" id="IPR053926">
    <property type="entry name" value="RecX_HTH_1st"/>
</dbReference>
<dbReference type="InterPro" id="IPR053924">
    <property type="entry name" value="RecX_HTH_2nd"/>
</dbReference>
<dbReference type="InterPro" id="IPR053925">
    <property type="entry name" value="RecX_HTH_3rd"/>
</dbReference>
<dbReference type="InterPro" id="IPR003783">
    <property type="entry name" value="Regulatory_RecX"/>
</dbReference>
<dbReference type="InterPro" id="IPR036388">
    <property type="entry name" value="WH-like_DNA-bd_sf"/>
</dbReference>
<dbReference type="NCBIfam" id="NF001054">
    <property type="entry name" value="PRK00117.2-1"/>
    <property type="match status" value="1"/>
</dbReference>
<dbReference type="PANTHER" id="PTHR33602">
    <property type="entry name" value="REGULATORY PROTEIN RECX FAMILY PROTEIN"/>
    <property type="match status" value="1"/>
</dbReference>
<dbReference type="PANTHER" id="PTHR33602:SF1">
    <property type="entry name" value="REGULATORY PROTEIN RECX FAMILY PROTEIN"/>
    <property type="match status" value="1"/>
</dbReference>
<dbReference type="Pfam" id="PF21982">
    <property type="entry name" value="RecX_HTH1"/>
    <property type="match status" value="1"/>
</dbReference>
<dbReference type="Pfam" id="PF02631">
    <property type="entry name" value="RecX_HTH2"/>
    <property type="match status" value="1"/>
</dbReference>
<dbReference type="Pfam" id="PF21981">
    <property type="entry name" value="RecX_HTH3"/>
    <property type="match status" value="1"/>
</dbReference>
<proteinExistence type="inferred from homology"/>
<protein>
    <recommendedName>
        <fullName evidence="1">Regulatory protein RecX</fullName>
    </recommendedName>
</protein>
<feature type="chain" id="PRO_1000137205" description="Regulatory protein RecX">
    <location>
        <begin position="1"/>
        <end position="162"/>
    </location>
</feature>
<organism>
    <name type="scientific">Xanthomonas campestris pv. campestris (strain B100)</name>
    <dbReference type="NCBI Taxonomy" id="509169"/>
    <lineage>
        <taxon>Bacteria</taxon>
        <taxon>Pseudomonadati</taxon>
        <taxon>Pseudomonadota</taxon>
        <taxon>Gammaproteobacteria</taxon>
        <taxon>Lysobacterales</taxon>
        <taxon>Lysobacteraceae</taxon>
        <taxon>Xanthomonas</taxon>
    </lineage>
</organism>
<gene>
    <name evidence="1" type="primary">recX</name>
    <name type="ordered locus">xcc-b100_2536</name>
</gene>
<evidence type="ECO:0000255" key="1">
    <source>
        <dbReference type="HAMAP-Rule" id="MF_01114"/>
    </source>
</evidence>
<name>RECX_XANCB</name>
<keyword id="KW-0963">Cytoplasm</keyword>
<reference key="1">
    <citation type="journal article" date="2008" name="J. Biotechnol.">
        <title>The genome of Xanthomonas campestris pv. campestris B100 and its use for the reconstruction of metabolic pathways involved in xanthan biosynthesis.</title>
        <authorList>
            <person name="Vorhoelter F.-J."/>
            <person name="Schneiker S."/>
            <person name="Goesmann A."/>
            <person name="Krause L."/>
            <person name="Bekel T."/>
            <person name="Kaiser O."/>
            <person name="Linke B."/>
            <person name="Patschkowski T."/>
            <person name="Rueckert C."/>
            <person name="Schmid J."/>
            <person name="Sidhu V.K."/>
            <person name="Sieber V."/>
            <person name="Tauch A."/>
            <person name="Watt S.A."/>
            <person name="Weisshaar B."/>
            <person name="Becker A."/>
            <person name="Niehaus K."/>
            <person name="Puehler A."/>
        </authorList>
    </citation>
    <scope>NUCLEOTIDE SEQUENCE [LARGE SCALE GENOMIC DNA]</scope>
    <source>
        <strain>B100</strain>
    </source>
</reference>
<comment type="function">
    <text evidence="1">Modulates RecA activity.</text>
</comment>
<comment type="subcellular location">
    <subcellularLocation>
        <location evidence="1">Cytoplasm</location>
    </subcellularLocation>
</comment>
<comment type="similarity">
    <text evidence="1">Belongs to the RecX family.</text>
</comment>
<sequence length="162" mass="18003">MSEQAPAPKRGRRFKEQTPVQRALGLLVRREHSKKELNRKLQARGIEPEAAQAAVERLAGEGWQDDVRFAASVVRNRASSGYGPLHIRAELGTHGLDSDAVSAAMATFEGDWTENALDLIRRRFGEDGPVDLAQRRKAADLLARRGFDGNSIRLATRFDLED</sequence>
<accession>B0RTY2</accession>